<feature type="signal peptide">
    <location>
        <begin position="1"/>
        <end position="20"/>
    </location>
</feature>
<feature type="chain" id="PRO_0000032272" description="Alpha/beta-gliadin A-V">
    <location>
        <begin position="21"/>
        <end position="319"/>
    </location>
</feature>
<feature type="region of interest" description="Disordered" evidence="2">
    <location>
        <begin position="28"/>
        <end position="125"/>
    </location>
</feature>
<feature type="region of interest" description="Disordered" evidence="2">
    <location>
        <begin position="258"/>
        <end position="278"/>
    </location>
</feature>
<feature type="compositionally biased region" description="Low complexity" evidence="2">
    <location>
        <begin position="28"/>
        <end position="58"/>
    </location>
</feature>
<feature type="compositionally biased region" description="Pro residues" evidence="2">
    <location>
        <begin position="59"/>
        <end position="71"/>
    </location>
</feature>
<feature type="compositionally biased region" description="Pro residues" evidence="2">
    <location>
        <begin position="81"/>
        <end position="104"/>
    </location>
</feature>
<feature type="compositionally biased region" description="Low complexity" evidence="2">
    <location>
        <begin position="105"/>
        <end position="125"/>
    </location>
</feature>
<feature type="compositionally biased region" description="Polar residues" evidence="2">
    <location>
        <begin position="267"/>
        <end position="278"/>
    </location>
</feature>
<accession>P04725</accession>
<protein>
    <recommendedName>
        <fullName>Alpha/beta-gliadin A-V</fullName>
    </recommendedName>
    <alternativeName>
        <fullName>Prolamin</fullName>
    </alternativeName>
</protein>
<keyword id="KW-0020">Allergen</keyword>
<keyword id="KW-1185">Reference proteome</keyword>
<keyword id="KW-0677">Repeat</keyword>
<keyword id="KW-0708">Seed storage protein</keyword>
<keyword id="KW-0732">Signal</keyword>
<keyword id="KW-0758">Storage protein</keyword>
<sequence>MKTFLILALLAIVATTATTAVRVPVPQLQPQNPSQQQPQEQVPLVQQQQFPGQQQQFPPQQPYPQPQPFPSQQPYLQLQPFPQPQPFPPQLPYPQPQSFPPQQPYPQQQPQYLQPQQPISQQQAQQQQQQQQQQQQQQQILQQILQQQLIPCRDVVLQQHNIAHASSQVLQQSTYQLLQQLCCQQLLQIPEQSQCQAIHNVAHAIIMHQQQQQQQEQKQQLQQQQQQQQQLQQQQQQQQQQPSSQVSFQQPQQQYPSSQVSFQPSQLNPQAQGSVQPQQLPQFAEIRNLALQTLPAMCNVYIPPHCSTTIAPFGISGTN</sequence>
<proteinExistence type="evidence at transcript level"/>
<name>GDA5_WHEAT</name>
<organism>
    <name type="scientific">Triticum aestivum</name>
    <name type="common">Wheat</name>
    <dbReference type="NCBI Taxonomy" id="4565"/>
    <lineage>
        <taxon>Eukaryota</taxon>
        <taxon>Viridiplantae</taxon>
        <taxon>Streptophyta</taxon>
        <taxon>Embryophyta</taxon>
        <taxon>Tracheophyta</taxon>
        <taxon>Spermatophyta</taxon>
        <taxon>Magnoliopsida</taxon>
        <taxon>Liliopsida</taxon>
        <taxon>Poales</taxon>
        <taxon>Poaceae</taxon>
        <taxon>BOP clade</taxon>
        <taxon>Pooideae</taxon>
        <taxon>Triticodae</taxon>
        <taxon>Triticeae</taxon>
        <taxon>Triticinae</taxon>
        <taxon>Triticum</taxon>
    </lineage>
</organism>
<comment type="function">
    <text>Gliadin is the major seed storage protein in wheat.</text>
</comment>
<comment type="PTM">
    <text evidence="1">Substrate of transglutaminase.</text>
</comment>
<comment type="allergen">
    <text evidence="1">Causes an allergic reaction in human. Is the cause of the celiac disease, also known as celiac sprue or gluten-sensitive enteropathy (By similarity).</text>
</comment>
<comment type="miscellaneous">
    <text>The alpha/beta-gliadins can be divided into 5 homology classes. Sequence divergence between the classes is due to single base substitutions and to duplications or deletions within or near direct repeats. There are more than a 100 copies of the gene for alpha/beta-gliadin per haploid genome.</text>
</comment>
<comment type="similarity">
    <text evidence="3">Belongs to the gliadin/glutenin family.</text>
</comment>
<dbReference type="EMBL" id="M11073">
    <property type="protein sequence ID" value="AAA34278.1"/>
    <property type="molecule type" value="mRNA"/>
</dbReference>
<dbReference type="PIR" id="A22364">
    <property type="entry name" value="A22364"/>
</dbReference>
<dbReference type="STRING" id="4565.P04725"/>
<dbReference type="Proteomes" id="UP000019116">
    <property type="component" value="Unplaced"/>
</dbReference>
<dbReference type="ExpressionAtlas" id="P04725">
    <property type="expression patterns" value="baseline and differential"/>
</dbReference>
<dbReference type="GO" id="GO:0045735">
    <property type="term" value="F:nutrient reservoir activity"/>
    <property type="evidence" value="ECO:0007669"/>
    <property type="project" value="UniProtKB-KW"/>
</dbReference>
<dbReference type="Gene3D" id="1.10.110.10">
    <property type="entry name" value="Plant lipid-transfer and hydrophobic proteins"/>
    <property type="match status" value="1"/>
</dbReference>
<dbReference type="InterPro" id="IPR036312">
    <property type="entry name" value="Bifun_inhib/LTP/seed_sf"/>
</dbReference>
<dbReference type="InterPro" id="IPR016140">
    <property type="entry name" value="Bifunc_inhib/LTP/seed_store"/>
</dbReference>
<dbReference type="InterPro" id="IPR001954">
    <property type="entry name" value="Glia_glutenin"/>
</dbReference>
<dbReference type="PANTHER" id="PTHR33454:SF7">
    <property type="entry name" value="ALPHA_BETA-GLIADIN MM1"/>
    <property type="match status" value="1"/>
</dbReference>
<dbReference type="PANTHER" id="PTHR33454">
    <property type="entry name" value="PROLAMIN PPROL 14P"/>
    <property type="match status" value="1"/>
</dbReference>
<dbReference type="PRINTS" id="PR00208">
    <property type="entry name" value="GLIADGLUTEN"/>
</dbReference>
<dbReference type="PRINTS" id="PR00209">
    <property type="entry name" value="GLIADIN"/>
</dbReference>
<dbReference type="SMART" id="SM00499">
    <property type="entry name" value="AAI"/>
    <property type="match status" value="1"/>
</dbReference>
<dbReference type="SUPFAM" id="SSF47699">
    <property type="entry name" value="Bifunctional inhibitor/lipid-transfer protein/seed storage 2S albumin"/>
    <property type="match status" value="1"/>
</dbReference>
<evidence type="ECO:0000250" key="1"/>
<evidence type="ECO:0000256" key="2">
    <source>
        <dbReference type="SAM" id="MobiDB-lite"/>
    </source>
</evidence>
<evidence type="ECO:0000305" key="3"/>
<reference key="1">
    <citation type="journal article" date="1985" name="J. Biol. Chem.">
        <title>Evolution and heterogeneity of the alpha-/beta-type and gamma-type gliadin DNA sequences.</title>
        <authorList>
            <person name="Okita T.W."/>
            <person name="Cheesbrough V."/>
            <person name="Reeves C.D."/>
        </authorList>
    </citation>
    <scope>NUCLEOTIDE SEQUENCE [MRNA]</scope>
</reference>